<reference key="1">
    <citation type="journal article" date="2007" name="Genome Res.">
        <title>Lateral gene transfer between obligate intracellular bacteria: evidence from the Rickettsia massiliae genome.</title>
        <authorList>
            <person name="Blanc G."/>
            <person name="Ogata H."/>
            <person name="Robert C."/>
            <person name="Audic S."/>
            <person name="Claverie J.-M."/>
            <person name="Raoult D."/>
        </authorList>
    </citation>
    <scope>NUCLEOTIDE SEQUENCE [LARGE SCALE GENOMIC DNA]</scope>
    <source>
        <strain>Mtu5</strain>
    </source>
</reference>
<dbReference type="EMBL" id="CP000683">
    <property type="protein sequence ID" value="ABV85119.1"/>
    <property type="molecule type" value="Genomic_DNA"/>
</dbReference>
<dbReference type="RefSeq" id="WP_012153084.1">
    <property type="nucleotide sequence ID" value="NC_009900.1"/>
</dbReference>
<dbReference type="SMR" id="A8F2I3"/>
<dbReference type="KEGG" id="rms:RMA_1104"/>
<dbReference type="HOGENOM" id="CLU_014218_8_2_5"/>
<dbReference type="Proteomes" id="UP000001311">
    <property type="component" value="Chromosome"/>
</dbReference>
<dbReference type="GO" id="GO:0009376">
    <property type="term" value="C:HslUV protease complex"/>
    <property type="evidence" value="ECO:0007669"/>
    <property type="project" value="TreeGrafter"/>
</dbReference>
<dbReference type="GO" id="GO:0005524">
    <property type="term" value="F:ATP binding"/>
    <property type="evidence" value="ECO:0007669"/>
    <property type="project" value="UniProtKB-UniRule"/>
</dbReference>
<dbReference type="GO" id="GO:0016887">
    <property type="term" value="F:ATP hydrolysis activity"/>
    <property type="evidence" value="ECO:0007669"/>
    <property type="project" value="InterPro"/>
</dbReference>
<dbReference type="GO" id="GO:0140662">
    <property type="term" value="F:ATP-dependent protein folding chaperone"/>
    <property type="evidence" value="ECO:0007669"/>
    <property type="project" value="InterPro"/>
</dbReference>
<dbReference type="GO" id="GO:0046983">
    <property type="term" value="F:protein dimerization activity"/>
    <property type="evidence" value="ECO:0007669"/>
    <property type="project" value="InterPro"/>
</dbReference>
<dbReference type="GO" id="GO:0051082">
    <property type="term" value="F:unfolded protein binding"/>
    <property type="evidence" value="ECO:0007669"/>
    <property type="project" value="UniProtKB-UniRule"/>
</dbReference>
<dbReference type="GO" id="GO:0008270">
    <property type="term" value="F:zinc ion binding"/>
    <property type="evidence" value="ECO:0007669"/>
    <property type="project" value="InterPro"/>
</dbReference>
<dbReference type="GO" id="GO:0051301">
    <property type="term" value="P:cell division"/>
    <property type="evidence" value="ECO:0007669"/>
    <property type="project" value="TreeGrafter"/>
</dbReference>
<dbReference type="GO" id="GO:0051603">
    <property type="term" value="P:proteolysis involved in protein catabolic process"/>
    <property type="evidence" value="ECO:0007669"/>
    <property type="project" value="TreeGrafter"/>
</dbReference>
<dbReference type="CDD" id="cd19497">
    <property type="entry name" value="RecA-like_ClpX"/>
    <property type="match status" value="1"/>
</dbReference>
<dbReference type="FunFam" id="1.10.8.60:FF:000002">
    <property type="entry name" value="ATP-dependent Clp protease ATP-binding subunit ClpX"/>
    <property type="match status" value="1"/>
</dbReference>
<dbReference type="FunFam" id="3.40.50.300:FF:000005">
    <property type="entry name" value="ATP-dependent Clp protease ATP-binding subunit ClpX"/>
    <property type="match status" value="1"/>
</dbReference>
<dbReference type="Gene3D" id="1.10.8.60">
    <property type="match status" value="1"/>
</dbReference>
<dbReference type="Gene3D" id="6.20.220.10">
    <property type="entry name" value="ClpX chaperone, C4-type zinc finger domain"/>
    <property type="match status" value="1"/>
</dbReference>
<dbReference type="Gene3D" id="3.40.50.300">
    <property type="entry name" value="P-loop containing nucleotide triphosphate hydrolases"/>
    <property type="match status" value="1"/>
</dbReference>
<dbReference type="HAMAP" id="MF_00175">
    <property type="entry name" value="ClpX"/>
    <property type="match status" value="1"/>
</dbReference>
<dbReference type="InterPro" id="IPR003593">
    <property type="entry name" value="AAA+_ATPase"/>
</dbReference>
<dbReference type="InterPro" id="IPR050052">
    <property type="entry name" value="ATP-dep_Clp_protease_ClpX"/>
</dbReference>
<dbReference type="InterPro" id="IPR003959">
    <property type="entry name" value="ATPase_AAA_core"/>
</dbReference>
<dbReference type="InterPro" id="IPR019489">
    <property type="entry name" value="Clp_ATPase_C"/>
</dbReference>
<dbReference type="InterPro" id="IPR004487">
    <property type="entry name" value="Clp_protease_ATP-bd_su_ClpX"/>
</dbReference>
<dbReference type="InterPro" id="IPR046425">
    <property type="entry name" value="ClpX_bact"/>
</dbReference>
<dbReference type="InterPro" id="IPR027417">
    <property type="entry name" value="P-loop_NTPase"/>
</dbReference>
<dbReference type="InterPro" id="IPR010603">
    <property type="entry name" value="Znf_CppX_C4"/>
</dbReference>
<dbReference type="InterPro" id="IPR038366">
    <property type="entry name" value="Znf_CppX_C4_sf"/>
</dbReference>
<dbReference type="NCBIfam" id="TIGR00382">
    <property type="entry name" value="clpX"/>
    <property type="match status" value="1"/>
</dbReference>
<dbReference type="NCBIfam" id="NF003745">
    <property type="entry name" value="PRK05342.1"/>
    <property type="match status" value="1"/>
</dbReference>
<dbReference type="PANTHER" id="PTHR48102:SF7">
    <property type="entry name" value="ATP-DEPENDENT CLP PROTEASE ATP-BINDING SUBUNIT CLPX-LIKE, MITOCHONDRIAL"/>
    <property type="match status" value="1"/>
</dbReference>
<dbReference type="PANTHER" id="PTHR48102">
    <property type="entry name" value="ATP-DEPENDENT CLP PROTEASE ATP-BINDING SUBUNIT CLPX-LIKE, MITOCHONDRIAL-RELATED"/>
    <property type="match status" value="1"/>
</dbReference>
<dbReference type="Pfam" id="PF07724">
    <property type="entry name" value="AAA_2"/>
    <property type="match status" value="1"/>
</dbReference>
<dbReference type="Pfam" id="PF10431">
    <property type="entry name" value="ClpB_D2-small"/>
    <property type="match status" value="1"/>
</dbReference>
<dbReference type="Pfam" id="PF06689">
    <property type="entry name" value="zf-C4_ClpX"/>
    <property type="match status" value="1"/>
</dbReference>
<dbReference type="SMART" id="SM00382">
    <property type="entry name" value="AAA"/>
    <property type="match status" value="1"/>
</dbReference>
<dbReference type="SMART" id="SM01086">
    <property type="entry name" value="ClpB_D2-small"/>
    <property type="match status" value="1"/>
</dbReference>
<dbReference type="SMART" id="SM00994">
    <property type="entry name" value="zf-C4_ClpX"/>
    <property type="match status" value="1"/>
</dbReference>
<dbReference type="SUPFAM" id="SSF57716">
    <property type="entry name" value="Glucocorticoid receptor-like (DNA-binding domain)"/>
    <property type="match status" value="1"/>
</dbReference>
<dbReference type="SUPFAM" id="SSF52540">
    <property type="entry name" value="P-loop containing nucleoside triphosphate hydrolases"/>
    <property type="match status" value="1"/>
</dbReference>
<dbReference type="PROSITE" id="PS51902">
    <property type="entry name" value="CLPX_ZB"/>
    <property type="match status" value="1"/>
</dbReference>
<accession>A8F2I3</accession>
<keyword id="KW-0067">ATP-binding</keyword>
<keyword id="KW-0143">Chaperone</keyword>
<keyword id="KW-0479">Metal-binding</keyword>
<keyword id="KW-0547">Nucleotide-binding</keyword>
<keyword id="KW-0862">Zinc</keyword>
<comment type="function">
    <text evidence="1">ATP-dependent specificity component of the Clp protease. It directs the protease to specific substrates. Can perform chaperone functions in the absence of ClpP.</text>
</comment>
<comment type="subunit">
    <text evidence="1">Component of the ClpX-ClpP complex. Forms a hexameric ring that, in the presence of ATP, binds to fourteen ClpP subunits assembled into a disk-like structure with a central cavity, resembling the structure of eukaryotic proteasomes.</text>
</comment>
<comment type="similarity">
    <text evidence="1">Belongs to the ClpX chaperone family.</text>
</comment>
<evidence type="ECO:0000255" key="1">
    <source>
        <dbReference type="HAMAP-Rule" id="MF_00175"/>
    </source>
</evidence>
<evidence type="ECO:0000255" key="2">
    <source>
        <dbReference type="PROSITE-ProRule" id="PRU01250"/>
    </source>
</evidence>
<organism>
    <name type="scientific">Rickettsia massiliae (strain Mtu5)</name>
    <dbReference type="NCBI Taxonomy" id="416276"/>
    <lineage>
        <taxon>Bacteria</taxon>
        <taxon>Pseudomonadati</taxon>
        <taxon>Pseudomonadota</taxon>
        <taxon>Alphaproteobacteria</taxon>
        <taxon>Rickettsiales</taxon>
        <taxon>Rickettsiaceae</taxon>
        <taxon>Rickettsieae</taxon>
        <taxon>Rickettsia</taxon>
        <taxon>spotted fever group</taxon>
    </lineage>
</organism>
<name>CLPX_RICM5</name>
<sequence length="425" mass="46647">MVVETDKKELICSFCSKKQHEVKKLIAGPAVFICDECIDLCTDIMKEESKVALKQITSSIPTPQKICGILNDYVVGQDQAKKILAVAVYNHYKRLEYVQSGNNDVELNKSNILLIGPTGSGKTLLAQTLAKILDVPFTMADATSLTEAGYVGEDVENILLRLLIAAEFNIAKAQKGIIYIDEVDKIARKSENPSITRDVSGEGVQQALLKIMEGTVASVPPQGGRKHPQQDFVQLDTSNILFICGGAFMGIDSIITSRTNHSSIGFAANVNIDKEKNNSEILKSLEIEDLTKFGLIPEFIGRLPIVTTLDELDNEALITILTKPKNAIVKQYQKQFELDDAELVIDDSALEAIAEKALAKKTGARGLRSILEHLLLDSMYKVAELKKQRVIITQEVVNGLVEPIMTSLISTKSNKKQPIIEDIPA</sequence>
<protein>
    <recommendedName>
        <fullName evidence="1">ATP-dependent Clp protease ATP-binding subunit ClpX</fullName>
    </recommendedName>
</protein>
<feature type="chain" id="PRO_1000058344" description="ATP-dependent Clp protease ATP-binding subunit ClpX">
    <location>
        <begin position="1"/>
        <end position="425"/>
    </location>
</feature>
<feature type="domain" description="ClpX-type ZB" evidence="2">
    <location>
        <begin position="1"/>
        <end position="53"/>
    </location>
</feature>
<feature type="binding site" evidence="2">
    <location>
        <position position="12"/>
    </location>
    <ligand>
        <name>Zn(2+)</name>
        <dbReference type="ChEBI" id="CHEBI:29105"/>
    </ligand>
</feature>
<feature type="binding site" evidence="2">
    <location>
        <position position="15"/>
    </location>
    <ligand>
        <name>Zn(2+)</name>
        <dbReference type="ChEBI" id="CHEBI:29105"/>
    </ligand>
</feature>
<feature type="binding site" evidence="2">
    <location>
        <position position="34"/>
    </location>
    <ligand>
        <name>Zn(2+)</name>
        <dbReference type="ChEBI" id="CHEBI:29105"/>
    </ligand>
</feature>
<feature type="binding site" evidence="2">
    <location>
        <position position="37"/>
    </location>
    <ligand>
        <name>Zn(2+)</name>
        <dbReference type="ChEBI" id="CHEBI:29105"/>
    </ligand>
</feature>
<feature type="binding site" evidence="1">
    <location>
        <begin position="117"/>
        <end position="124"/>
    </location>
    <ligand>
        <name>ATP</name>
        <dbReference type="ChEBI" id="CHEBI:30616"/>
    </ligand>
</feature>
<gene>
    <name evidence="1" type="primary">clpX</name>
    <name type="ordered locus">RMA_1104</name>
</gene>
<proteinExistence type="inferred from homology"/>